<reference key="1">
    <citation type="submission" date="2006-03" db="EMBL/GenBank/DDBJ databases">
        <title>Complete sequence of chromosome of Psychrobacter cryohalolentis K5.</title>
        <authorList>
            <consortium name="US DOE Joint Genome Institute"/>
            <person name="Copeland A."/>
            <person name="Lucas S."/>
            <person name="Lapidus A."/>
            <person name="Barry K."/>
            <person name="Detter J.C."/>
            <person name="Glavina T."/>
            <person name="Hammon N."/>
            <person name="Israni S."/>
            <person name="Dalin E."/>
            <person name="Tice H."/>
            <person name="Pitluck S."/>
            <person name="Brettin T."/>
            <person name="Bruce D."/>
            <person name="Han C."/>
            <person name="Tapia R."/>
            <person name="Sims D.R."/>
            <person name="Gilna P."/>
            <person name="Schmutz J."/>
            <person name="Larimer F."/>
            <person name="Land M."/>
            <person name="Hauser L."/>
            <person name="Kyrpides N."/>
            <person name="Kim E."/>
            <person name="Richardson P."/>
        </authorList>
    </citation>
    <scope>NUCLEOTIDE SEQUENCE [LARGE SCALE GENOMIC DNA]</scope>
    <source>
        <strain>ATCC BAA-1226 / DSM 17306 / VKM B-2378 / K5</strain>
    </source>
</reference>
<sequence>MMLNATEFLTPNAINVDTVNETIAKVTLEPLERGFGHTLGNALRRILLSSLPGAAVIEAEIDGVDHEYSTLEGLQEDVLDLLLNLKGLAITLHDQNEVFLTLDKQGPGTITAADITLPHNVDIINPELVLGTLSDRGHLKMRLRVVMGRGYEPANQRREDGDTKAIGRLKLDASFSPVLRVAYQVENARVEQRTDLDRLIIELETNGTIDPEEAIRKAATILQQQISIFVDLEAEEAPEPVKEKEEVDPVLLRPVDDLELTVRSANCLKAENIYYIGDLVQRSETELLKTPNLGKKSLTEIKDVLASKDLELGMRLDNWPPADLRVDDRFSYRSR</sequence>
<protein>
    <recommendedName>
        <fullName evidence="1">DNA-directed RNA polymerase subunit alpha</fullName>
        <shortName evidence="1">RNAP subunit alpha</shortName>
        <ecNumber evidence="1">2.7.7.6</ecNumber>
    </recommendedName>
    <alternativeName>
        <fullName evidence="1">RNA polymerase subunit alpha</fullName>
    </alternativeName>
    <alternativeName>
        <fullName evidence="1">Transcriptase subunit alpha</fullName>
    </alternativeName>
</protein>
<feature type="chain" id="PRO_0000264528" description="DNA-directed RNA polymerase subunit alpha">
    <location>
        <begin position="1"/>
        <end position="335"/>
    </location>
</feature>
<feature type="region of interest" description="Alpha N-terminal domain (alpha-NTD)" evidence="1">
    <location>
        <begin position="1"/>
        <end position="233"/>
    </location>
</feature>
<feature type="region of interest" description="Alpha C-terminal domain (alpha-CTD)" evidence="1">
    <location>
        <begin position="247"/>
        <end position="335"/>
    </location>
</feature>
<proteinExistence type="inferred from homology"/>
<dbReference type="EC" id="2.7.7.6" evidence="1"/>
<dbReference type="EMBL" id="CP000323">
    <property type="protein sequence ID" value="ABE74292.1"/>
    <property type="molecule type" value="Genomic_DNA"/>
</dbReference>
<dbReference type="RefSeq" id="WP_011279808.1">
    <property type="nucleotide sequence ID" value="NC_007969.1"/>
</dbReference>
<dbReference type="SMR" id="Q1QDG1"/>
<dbReference type="STRING" id="335284.Pcryo_0509"/>
<dbReference type="KEGG" id="pcr:Pcryo_0509"/>
<dbReference type="eggNOG" id="COG0202">
    <property type="taxonomic scope" value="Bacteria"/>
</dbReference>
<dbReference type="HOGENOM" id="CLU_053084_0_0_6"/>
<dbReference type="Proteomes" id="UP000002425">
    <property type="component" value="Chromosome"/>
</dbReference>
<dbReference type="GO" id="GO:0005737">
    <property type="term" value="C:cytoplasm"/>
    <property type="evidence" value="ECO:0007669"/>
    <property type="project" value="UniProtKB-ARBA"/>
</dbReference>
<dbReference type="GO" id="GO:0000428">
    <property type="term" value="C:DNA-directed RNA polymerase complex"/>
    <property type="evidence" value="ECO:0007669"/>
    <property type="project" value="UniProtKB-KW"/>
</dbReference>
<dbReference type="GO" id="GO:0003677">
    <property type="term" value="F:DNA binding"/>
    <property type="evidence" value="ECO:0007669"/>
    <property type="project" value="UniProtKB-UniRule"/>
</dbReference>
<dbReference type="GO" id="GO:0003899">
    <property type="term" value="F:DNA-directed RNA polymerase activity"/>
    <property type="evidence" value="ECO:0007669"/>
    <property type="project" value="UniProtKB-UniRule"/>
</dbReference>
<dbReference type="GO" id="GO:0046983">
    <property type="term" value="F:protein dimerization activity"/>
    <property type="evidence" value="ECO:0007669"/>
    <property type="project" value="InterPro"/>
</dbReference>
<dbReference type="GO" id="GO:0006351">
    <property type="term" value="P:DNA-templated transcription"/>
    <property type="evidence" value="ECO:0007669"/>
    <property type="project" value="UniProtKB-UniRule"/>
</dbReference>
<dbReference type="CDD" id="cd06928">
    <property type="entry name" value="RNAP_alpha_NTD"/>
    <property type="match status" value="1"/>
</dbReference>
<dbReference type="FunFam" id="1.10.150.20:FF:000001">
    <property type="entry name" value="DNA-directed RNA polymerase subunit alpha"/>
    <property type="match status" value="1"/>
</dbReference>
<dbReference type="FunFam" id="2.170.120.12:FF:000001">
    <property type="entry name" value="DNA-directed RNA polymerase subunit alpha"/>
    <property type="match status" value="1"/>
</dbReference>
<dbReference type="Gene3D" id="1.10.150.20">
    <property type="entry name" value="5' to 3' exonuclease, C-terminal subdomain"/>
    <property type="match status" value="1"/>
</dbReference>
<dbReference type="Gene3D" id="2.170.120.12">
    <property type="entry name" value="DNA-directed RNA polymerase, insert domain"/>
    <property type="match status" value="1"/>
</dbReference>
<dbReference type="Gene3D" id="3.30.1360.10">
    <property type="entry name" value="RNA polymerase, RBP11-like subunit"/>
    <property type="match status" value="1"/>
</dbReference>
<dbReference type="HAMAP" id="MF_00059">
    <property type="entry name" value="RNApol_bact_RpoA"/>
    <property type="match status" value="1"/>
</dbReference>
<dbReference type="InterPro" id="IPR011262">
    <property type="entry name" value="DNA-dir_RNA_pol_insert"/>
</dbReference>
<dbReference type="InterPro" id="IPR011263">
    <property type="entry name" value="DNA-dir_RNA_pol_RpoA/D/Rpb3"/>
</dbReference>
<dbReference type="InterPro" id="IPR011773">
    <property type="entry name" value="DNA-dir_RpoA"/>
</dbReference>
<dbReference type="InterPro" id="IPR036603">
    <property type="entry name" value="RBP11-like"/>
</dbReference>
<dbReference type="InterPro" id="IPR011260">
    <property type="entry name" value="RNAP_asu_C"/>
</dbReference>
<dbReference type="InterPro" id="IPR036643">
    <property type="entry name" value="RNApol_insert_sf"/>
</dbReference>
<dbReference type="NCBIfam" id="NF003513">
    <property type="entry name" value="PRK05182.1-2"/>
    <property type="match status" value="1"/>
</dbReference>
<dbReference type="NCBIfam" id="NF003519">
    <property type="entry name" value="PRK05182.2-5"/>
    <property type="match status" value="1"/>
</dbReference>
<dbReference type="NCBIfam" id="TIGR02027">
    <property type="entry name" value="rpoA"/>
    <property type="match status" value="1"/>
</dbReference>
<dbReference type="Pfam" id="PF01000">
    <property type="entry name" value="RNA_pol_A_bac"/>
    <property type="match status" value="1"/>
</dbReference>
<dbReference type="Pfam" id="PF03118">
    <property type="entry name" value="RNA_pol_A_CTD"/>
    <property type="match status" value="1"/>
</dbReference>
<dbReference type="Pfam" id="PF01193">
    <property type="entry name" value="RNA_pol_L"/>
    <property type="match status" value="1"/>
</dbReference>
<dbReference type="SMART" id="SM00662">
    <property type="entry name" value="RPOLD"/>
    <property type="match status" value="1"/>
</dbReference>
<dbReference type="SUPFAM" id="SSF47789">
    <property type="entry name" value="C-terminal domain of RNA polymerase alpha subunit"/>
    <property type="match status" value="1"/>
</dbReference>
<dbReference type="SUPFAM" id="SSF56553">
    <property type="entry name" value="Insert subdomain of RNA polymerase alpha subunit"/>
    <property type="match status" value="1"/>
</dbReference>
<dbReference type="SUPFAM" id="SSF55257">
    <property type="entry name" value="RBP11-like subunits of RNA polymerase"/>
    <property type="match status" value="1"/>
</dbReference>
<gene>
    <name evidence="1" type="primary">rpoA</name>
    <name type="ordered locus">Pcryo_0509</name>
</gene>
<name>RPOA_PSYCK</name>
<comment type="function">
    <text evidence="1">DNA-dependent RNA polymerase catalyzes the transcription of DNA into RNA using the four ribonucleoside triphosphates as substrates.</text>
</comment>
<comment type="catalytic activity">
    <reaction evidence="1">
        <text>RNA(n) + a ribonucleoside 5'-triphosphate = RNA(n+1) + diphosphate</text>
        <dbReference type="Rhea" id="RHEA:21248"/>
        <dbReference type="Rhea" id="RHEA-COMP:14527"/>
        <dbReference type="Rhea" id="RHEA-COMP:17342"/>
        <dbReference type="ChEBI" id="CHEBI:33019"/>
        <dbReference type="ChEBI" id="CHEBI:61557"/>
        <dbReference type="ChEBI" id="CHEBI:140395"/>
        <dbReference type="EC" id="2.7.7.6"/>
    </reaction>
</comment>
<comment type="subunit">
    <text evidence="1">Homodimer. The RNAP catalytic core consists of 2 alpha, 1 beta, 1 beta' and 1 omega subunit. When a sigma factor is associated with the core the holoenzyme is formed, which can initiate transcription.</text>
</comment>
<comment type="domain">
    <text evidence="1">The N-terminal domain is essential for RNAP assembly and basal transcription, whereas the C-terminal domain is involved in interaction with transcriptional regulators and with upstream promoter elements.</text>
</comment>
<comment type="similarity">
    <text evidence="1">Belongs to the RNA polymerase alpha chain family.</text>
</comment>
<accession>Q1QDG1</accession>
<evidence type="ECO:0000255" key="1">
    <source>
        <dbReference type="HAMAP-Rule" id="MF_00059"/>
    </source>
</evidence>
<organism>
    <name type="scientific">Psychrobacter cryohalolentis (strain ATCC BAA-1226 / DSM 17306 / VKM B-2378 / K5)</name>
    <dbReference type="NCBI Taxonomy" id="335284"/>
    <lineage>
        <taxon>Bacteria</taxon>
        <taxon>Pseudomonadati</taxon>
        <taxon>Pseudomonadota</taxon>
        <taxon>Gammaproteobacteria</taxon>
        <taxon>Moraxellales</taxon>
        <taxon>Moraxellaceae</taxon>
        <taxon>Psychrobacter</taxon>
    </lineage>
</organism>
<keyword id="KW-0240">DNA-directed RNA polymerase</keyword>
<keyword id="KW-0548">Nucleotidyltransferase</keyword>
<keyword id="KW-0804">Transcription</keyword>
<keyword id="KW-0808">Transferase</keyword>